<name>TIM9_DANRE</name>
<gene>
    <name type="primary">timm9</name>
    <name type="synonym">tim9</name>
</gene>
<organism>
    <name type="scientific">Danio rerio</name>
    <name type="common">Zebrafish</name>
    <name type="synonym">Brachydanio rerio</name>
    <dbReference type="NCBI Taxonomy" id="7955"/>
    <lineage>
        <taxon>Eukaryota</taxon>
        <taxon>Metazoa</taxon>
        <taxon>Chordata</taxon>
        <taxon>Craniata</taxon>
        <taxon>Vertebrata</taxon>
        <taxon>Euteleostomi</taxon>
        <taxon>Actinopterygii</taxon>
        <taxon>Neopterygii</taxon>
        <taxon>Teleostei</taxon>
        <taxon>Ostariophysi</taxon>
        <taxon>Cypriniformes</taxon>
        <taxon>Danionidae</taxon>
        <taxon>Danioninae</taxon>
        <taxon>Danio</taxon>
    </lineage>
</organism>
<protein>
    <recommendedName>
        <fullName>Mitochondrial import inner membrane translocase subunit Tim9</fullName>
    </recommendedName>
</protein>
<accession>Q9W762</accession>
<proteinExistence type="inferred from homology"/>
<comment type="function">
    <text evidence="1">Mitochondrial intermembrane chaperone that participates in the import and insertion of multi-pass transmembrane proteins into the mitochondrial inner membrane. May also be required for the transfer of beta-barrel precursors from the TOM complex to the sorting and assembly machinery (SAM complex) of the outer membrane. Acts as a chaperone-like protein that protects the hydrophobic precursors from aggregation and guide them through the mitochondrial intermembrane space (By similarity).</text>
</comment>
<comment type="subunit">
    <text evidence="1">Heterohexamer; composed of 3 copies of TIMM9 and 3 copies of TIMM10/TIM10A, named soluble 70 kDa complex. The complex forms a 6-bladed alpha-propeller structure and associates with the TIMM22 component of the TIM22 complex. Interacts with multi-pass transmembrane proteins in transit (By similarity).</text>
</comment>
<comment type="subcellular location">
    <subcellularLocation>
        <location evidence="1">Mitochondrion inner membrane</location>
        <topology evidence="1">Peripheral membrane protein</topology>
        <orientation evidence="1">Intermembrane side</orientation>
    </subcellularLocation>
</comment>
<comment type="domain">
    <text evidence="1">The twin CX3C motif contains 4 conserved Cys residues that form 2 disulfide bonds in the mitochondrial intermembrane space. However, during the transit of TIMM9 from cytoplasm into mitochondrion, the Cys residues probably coordinate zinc, thereby preventing folding and allowing its transfer across mitochondrial outer membrane (By similarity).</text>
</comment>
<comment type="similarity">
    <text evidence="2">Belongs to the small Tim family.</text>
</comment>
<comment type="sequence caution" evidence="2">
    <conflict type="erroneous initiation">
        <sequence resource="EMBL-CDS" id="AAD40013"/>
    </conflict>
</comment>
<feature type="chain" id="PRO_0000228036" description="Mitochondrial import inner membrane translocase subunit Tim9">
    <location>
        <begin position="1"/>
        <end position="84"/>
    </location>
</feature>
<feature type="short sequence motif" description="Twin CX3C motif">
    <location>
        <begin position="28"/>
        <end position="52"/>
    </location>
</feature>
<feature type="disulfide bond" evidence="1">
    <location>
        <begin position="28"/>
        <end position="52"/>
    </location>
</feature>
<feature type="disulfide bond" evidence="1">
    <location>
        <begin position="32"/>
        <end position="48"/>
    </location>
</feature>
<evidence type="ECO:0000250" key="1"/>
<evidence type="ECO:0000305" key="2"/>
<dbReference type="EMBL" id="AF150107">
    <property type="protein sequence ID" value="AAD40013.1"/>
    <property type="status" value="ALT_INIT"/>
    <property type="molecule type" value="mRNA"/>
</dbReference>
<dbReference type="PIR" id="T51193">
    <property type="entry name" value="T51193"/>
</dbReference>
<dbReference type="SMR" id="Q9W762"/>
<dbReference type="FunCoup" id="Q9W762">
    <property type="interactions" value="2219"/>
</dbReference>
<dbReference type="STRING" id="7955.ENSDARP00000106401"/>
<dbReference type="PaxDb" id="7955-ENSDARP00000106401"/>
<dbReference type="AGR" id="ZFIN:ZDB-GENE-021206-14"/>
<dbReference type="ZFIN" id="ZDB-GENE-021206-14">
    <property type="gene designation" value="timm9"/>
</dbReference>
<dbReference type="eggNOG" id="KOG3479">
    <property type="taxonomic scope" value="Eukaryota"/>
</dbReference>
<dbReference type="InParanoid" id="Q9W762"/>
<dbReference type="PhylomeDB" id="Q9W762"/>
<dbReference type="PRO" id="PR:Q9W762"/>
<dbReference type="Proteomes" id="UP000000437">
    <property type="component" value="Unplaced"/>
</dbReference>
<dbReference type="GO" id="GO:0005743">
    <property type="term" value="C:mitochondrial inner membrane"/>
    <property type="evidence" value="ECO:0007669"/>
    <property type="project" value="UniProtKB-SubCell"/>
</dbReference>
<dbReference type="GO" id="GO:0046872">
    <property type="term" value="F:metal ion binding"/>
    <property type="evidence" value="ECO:0007669"/>
    <property type="project" value="UniProtKB-KW"/>
</dbReference>
<dbReference type="GO" id="GO:0015031">
    <property type="term" value="P:protein transport"/>
    <property type="evidence" value="ECO:0007669"/>
    <property type="project" value="UniProtKB-KW"/>
</dbReference>
<dbReference type="FunFam" id="1.10.287.810:FF:000004">
    <property type="entry name" value="Mitochondrial import inner membrane translocase subunit Tim9"/>
    <property type="match status" value="1"/>
</dbReference>
<dbReference type="Gene3D" id="1.10.287.810">
    <property type="entry name" value="Mitochondrial import inner membrane translocase subunit tim13 like domains"/>
    <property type="match status" value="1"/>
</dbReference>
<dbReference type="InterPro" id="IPR050673">
    <property type="entry name" value="Mito_inner_translocase_sub"/>
</dbReference>
<dbReference type="InterPro" id="IPR004217">
    <property type="entry name" value="Tim10-like"/>
</dbReference>
<dbReference type="InterPro" id="IPR035427">
    <property type="entry name" value="Tim10-like_dom_sf"/>
</dbReference>
<dbReference type="PANTHER" id="PTHR13172">
    <property type="entry name" value="MITOCHONDRIAL IMPORT INNER MEMBRANE TRANSLOCASE SUBUNIT TIM9B"/>
    <property type="match status" value="1"/>
</dbReference>
<dbReference type="Pfam" id="PF02953">
    <property type="entry name" value="zf-Tim10_DDP"/>
    <property type="match status" value="1"/>
</dbReference>
<dbReference type="SUPFAM" id="SSF144122">
    <property type="entry name" value="Tim10-like"/>
    <property type="match status" value="1"/>
</dbReference>
<keyword id="KW-0143">Chaperone</keyword>
<keyword id="KW-1015">Disulfide bond</keyword>
<keyword id="KW-0472">Membrane</keyword>
<keyword id="KW-0479">Metal-binding</keyword>
<keyword id="KW-0496">Mitochondrion</keyword>
<keyword id="KW-0999">Mitochondrion inner membrane</keyword>
<keyword id="KW-0653">Protein transport</keyword>
<keyword id="KW-1185">Reference proteome</keyword>
<keyword id="KW-0811">Translocation</keyword>
<keyword id="KW-0813">Transport</keyword>
<keyword id="KW-0862">Zinc</keyword>
<sequence length="84" mass="10173">MAAQVTESDQIKQFKEFLGTYNKLTENCFMDCVKDFTTREVKPEETTCSESCLQKYLKMTQRISMRFQEYHIQQNERWPQKPDY</sequence>
<reference key="1">
    <citation type="journal article" date="1999" name="FEBS Lett.">
        <title>The mitochondrial TIM22 preprotein translocase is highly conserved throughout the eukaryotic kingdom.</title>
        <authorList>
            <person name="Bauer M.F."/>
            <person name="Rothbauer U."/>
            <person name="Muehlenbein N."/>
            <person name="Smith R.J.H."/>
            <person name="Gerbitz K.-D."/>
            <person name="Neupert W."/>
            <person name="Brunner M."/>
            <person name="Hofmann S."/>
        </authorList>
    </citation>
    <scope>NUCLEOTIDE SEQUENCE [MRNA]</scope>
</reference>